<comment type="function">
    <text evidence="1">Endonuclease that specifically degrades the RNA of RNA-DNA hybrids.</text>
</comment>
<comment type="catalytic activity">
    <reaction evidence="1">
        <text>Endonucleolytic cleavage to 5'-phosphomonoester.</text>
        <dbReference type="EC" id="3.1.26.4"/>
    </reaction>
</comment>
<comment type="cofactor">
    <cofactor evidence="1">
        <name>Mn(2+)</name>
        <dbReference type="ChEBI" id="CHEBI:29035"/>
    </cofactor>
    <cofactor evidence="1">
        <name>Mg(2+)</name>
        <dbReference type="ChEBI" id="CHEBI:18420"/>
    </cofactor>
    <text evidence="1">Manganese or magnesium. Binds 1 divalent metal ion per monomer in the absence of substrate. May bind a second metal ion after substrate binding.</text>
</comment>
<comment type="subcellular location">
    <subcellularLocation>
        <location evidence="1">Cytoplasm</location>
    </subcellularLocation>
</comment>
<comment type="similarity">
    <text evidence="1">Belongs to the RNase HII family.</text>
</comment>
<gene>
    <name evidence="1" type="primary">rnhB</name>
    <name type="ordered locus">HPG27_1272</name>
</gene>
<name>RNH2_HELPG</name>
<keyword id="KW-0963">Cytoplasm</keyword>
<keyword id="KW-0255">Endonuclease</keyword>
<keyword id="KW-0378">Hydrolase</keyword>
<keyword id="KW-0464">Manganese</keyword>
<keyword id="KW-0479">Metal-binding</keyword>
<keyword id="KW-0540">Nuclease</keyword>
<keyword id="KW-1185">Reference proteome</keyword>
<protein>
    <recommendedName>
        <fullName evidence="1">Ribonuclease HII</fullName>
        <shortName evidence="1">RNase HII</shortName>
        <ecNumber evidence="1">3.1.26.4</ecNumber>
    </recommendedName>
</protein>
<reference key="1">
    <citation type="journal article" date="2009" name="J. Bacteriol.">
        <title>The complete genome sequence of Helicobacter pylori strain G27.</title>
        <authorList>
            <person name="Baltrus D.A."/>
            <person name="Amieva M.R."/>
            <person name="Covacci A."/>
            <person name="Lowe T.M."/>
            <person name="Merrell D.S."/>
            <person name="Ottemann K.M."/>
            <person name="Stein M."/>
            <person name="Salama N.R."/>
            <person name="Guillemin K."/>
        </authorList>
    </citation>
    <scope>NUCLEOTIDE SEQUENCE [LARGE SCALE GENOMIC DNA]</scope>
    <source>
        <strain>G27</strain>
    </source>
</reference>
<evidence type="ECO:0000255" key="1">
    <source>
        <dbReference type="HAMAP-Rule" id="MF_00052"/>
    </source>
</evidence>
<evidence type="ECO:0000255" key="2">
    <source>
        <dbReference type="PROSITE-ProRule" id="PRU01319"/>
    </source>
</evidence>
<organism>
    <name type="scientific">Helicobacter pylori (strain G27)</name>
    <dbReference type="NCBI Taxonomy" id="563041"/>
    <lineage>
        <taxon>Bacteria</taxon>
        <taxon>Pseudomonadati</taxon>
        <taxon>Campylobacterota</taxon>
        <taxon>Epsilonproteobacteria</taxon>
        <taxon>Campylobacterales</taxon>
        <taxon>Helicobacteraceae</taxon>
        <taxon>Helicobacter</taxon>
    </lineage>
</organism>
<proteinExistence type="inferred from homology"/>
<sequence>MILGIDEAGRGCLAGSLFVAGVACDDQTALEFLKMGLKDSKKLSPKKRFFLEDKIKTHGEVGFFVVKKSANEIDSLGLGACLKLAVQEILENGCSLANEIKIDGNTAFGLNKRYPNIQTIIKGDEKIAQIAMASVLAKAFKDREMRQLHALFKEYGWDKNCGYGTKQHIEAISKLGATPFHRHSFTLKNRILNPKLLEVEQRLI</sequence>
<feature type="chain" id="PRO_1000091627" description="Ribonuclease HII">
    <location>
        <begin position="1"/>
        <end position="204"/>
    </location>
</feature>
<feature type="domain" description="RNase H type-2" evidence="2">
    <location>
        <begin position="1"/>
        <end position="197"/>
    </location>
</feature>
<feature type="binding site" evidence="1">
    <location>
        <position position="6"/>
    </location>
    <ligand>
        <name>a divalent metal cation</name>
        <dbReference type="ChEBI" id="CHEBI:60240"/>
    </ligand>
</feature>
<feature type="binding site" evidence="1">
    <location>
        <position position="7"/>
    </location>
    <ligand>
        <name>a divalent metal cation</name>
        <dbReference type="ChEBI" id="CHEBI:60240"/>
    </ligand>
</feature>
<feature type="binding site" evidence="1">
    <location>
        <position position="103"/>
    </location>
    <ligand>
        <name>a divalent metal cation</name>
        <dbReference type="ChEBI" id="CHEBI:60240"/>
    </ligand>
</feature>
<dbReference type="EC" id="3.1.26.4" evidence="1"/>
<dbReference type="EMBL" id="CP001173">
    <property type="protein sequence ID" value="ACI28020.1"/>
    <property type="molecule type" value="Genomic_DNA"/>
</dbReference>
<dbReference type="RefSeq" id="WP_000600298.1">
    <property type="nucleotide sequence ID" value="NC_011333.1"/>
</dbReference>
<dbReference type="SMR" id="B5Z8X1"/>
<dbReference type="KEGG" id="hpg:HPG27_1272"/>
<dbReference type="HOGENOM" id="CLU_036532_3_1_7"/>
<dbReference type="Proteomes" id="UP000001735">
    <property type="component" value="Chromosome"/>
</dbReference>
<dbReference type="GO" id="GO:0005737">
    <property type="term" value="C:cytoplasm"/>
    <property type="evidence" value="ECO:0007669"/>
    <property type="project" value="UniProtKB-SubCell"/>
</dbReference>
<dbReference type="GO" id="GO:0032299">
    <property type="term" value="C:ribonuclease H2 complex"/>
    <property type="evidence" value="ECO:0007669"/>
    <property type="project" value="TreeGrafter"/>
</dbReference>
<dbReference type="GO" id="GO:0030145">
    <property type="term" value="F:manganese ion binding"/>
    <property type="evidence" value="ECO:0007669"/>
    <property type="project" value="UniProtKB-UniRule"/>
</dbReference>
<dbReference type="GO" id="GO:0003723">
    <property type="term" value="F:RNA binding"/>
    <property type="evidence" value="ECO:0007669"/>
    <property type="project" value="InterPro"/>
</dbReference>
<dbReference type="GO" id="GO:0004523">
    <property type="term" value="F:RNA-DNA hybrid ribonuclease activity"/>
    <property type="evidence" value="ECO:0007669"/>
    <property type="project" value="UniProtKB-UniRule"/>
</dbReference>
<dbReference type="GO" id="GO:0043137">
    <property type="term" value="P:DNA replication, removal of RNA primer"/>
    <property type="evidence" value="ECO:0007669"/>
    <property type="project" value="TreeGrafter"/>
</dbReference>
<dbReference type="GO" id="GO:0006298">
    <property type="term" value="P:mismatch repair"/>
    <property type="evidence" value="ECO:0007669"/>
    <property type="project" value="TreeGrafter"/>
</dbReference>
<dbReference type="CDD" id="cd07182">
    <property type="entry name" value="RNase_HII_bacteria_HII_like"/>
    <property type="match status" value="1"/>
</dbReference>
<dbReference type="FunFam" id="3.30.420.10:FF:000204">
    <property type="entry name" value="Ribonuclease HII"/>
    <property type="match status" value="1"/>
</dbReference>
<dbReference type="Gene3D" id="3.30.420.10">
    <property type="entry name" value="Ribonuclease H-like superfamily/Ribonuclease H"/>
    <property type="match status" value="1"/>
</dbReference>
<dbReference type="HAMAP" id="MF_00052_B">
    <property type="entry name" value="RNase_HII_B"/>
    <property type="match status" value="1"/>
</dbReference>
<dbReference type="InterPro" id="IPR022898">
    <property type="entry name" value="RNase_HII"/>
</dbReference>
<dbReference type="InterPro" id="IPR001352">
    <property type="entry name" value="RNase_HII/HIII"/>
</dbReference>
<dbReference type="InterPro" id="IPR024567">
    <property type="entry name" value="RNase_HII/HIII_dom"/>
</dbReference>
<dbReference type="InterPro" id="IPR012337">
    <property type="entry name" value="RNaseH-like_sf"/>
</dbReference>
<dbReference type="InterPro" id="IPR036397">
    <property type="entry name" value="RNaseH_sf"/>
</dbReference>
<dbReference type="NCBIfam" id="NF000595">
    <property type="entry name" value="PRK00015.1-3"/>
    <property type="match status" value="1"/>
</dbReference>
<dbReference type="NCBIfam" id="NF011119">
    <property type="entry name" value="PRK14550.1"/>
    <property type="match status" value="1"/>
</dbReference>
<dbReference type="PANTHER" id="PTHR10954">
    <property type="entry name" value="RIBONUCLEASE H2 SUBUNIT A"/>
    <property type="match status" value="1"/>
</dbReference>
<dbReference type="PANTHER" id="PTHR10954:SF18">
    <property type="entry name" value="RIBONUCLEASE HII"/>
    <property type="match status" value="1"/>
</dbReference>
<dbReference type="Pfam" id="PF01351">
    <property type="entry name" value="RNase_HII"/>
    <property type="match status" value="1"/>
</dbReference>
<dbReference type="SUPFAM" id="SSF53098">
    <property type="entry name" value="Ribonuclease H-like"/>
    <property type="match status" value="1"/>
</dbReference>
<dbReference type="PROSITE" id="PS51975">
    <property type="entry name" value="RNASE_H_2"/>
    <property type="match status" value="1"/>
</dbReference>
<accession>B5Z8X1</accession>